<gene>
    <name evidence="1" type="primary">rlpA</name>
    <name type="ordered locus">Cj0646</name>
</gene>
<sequence>MQIKTITLKLSAVSLGALFFSGCLGTSFFSSLDNAQVYYPSNDFKSSPSSSGTKGTMKPYTINGKTYYPTVVAVGETADGIASWYGPGFHGKKTSNGETYNQNALTAAHKTLPMNTILKVTNLNNNRQVTVRVNDRGPFVNNRIIDLSKGAASQIDMIASGTAPVRLEVIGFGSSNSGNNIVHSNVNYGNSGEIANNGQIYEGGNFMVQIGAFKNPAGAQTIAARYKTYRTYSSTIRTSSVDGLNRVFLTGFRSEDEARDFAASGAFAGAFVVRE</sequence>
<dbReference type="EC" id="4.2.2.-" evidence="1"/>
<dbReference type="EMBL" id="AL111168">
    <property type="protein sequence ID" value="CAL34791.1"/>
    <property type="molecule type" value="Genomic_DNA"/>
</dbReference>
<dbReference type="PIR" id="E81413">
    <property type="entry name" value="E81413"/>
</dbReference>
<dbReference type="RefSeq" id="WP_002852227.1">
    <property type="nucleotide sequence ID" value="NZ_SZUC01000002.1"/>
</dbReference>
<dbReference type="RefSeq" id="YP_002344075.1">
    <property type="nucleotide sequence ID" value="NC_002163.1"/>
</dbReference>
<dbReference type="SMR" id="Q9PHM1"/>
<dbReference type="IntAct" id="Q9PHM1">
    <property type="interactions" value="2"/>
</dbReference>
<dbReference type="STRING" id="192222.Cj0646"/>
<dbReference type="PaxDb" id="192222-Cj0646"/>
<dbReference type="DNASU" id="904973"/>
<dbReference type="EnsemblBacteria" id="CAL34791">
    <property type="protein sequence ID" value="CAL34791"/>
    <property type="gene ID" value="Cj0646"/>
</dbReference>
<dbReference type="GeneID" id="904973"/>
<dbReference type="KEGG" id="cje:Cj0646"/>
<dbReference type="PATRIC" id="fig|192222.6.peg.638"/>
<dbReference type="eggNOG" id="COG0797">
    <property type="taxonomic scope" value="Bacteria"/>
</dbReference>
<dbReference type="HOGENOM" id="CLU_042923_3_4_7"/>
<dbReference type="OrthoDB" id="9779128at2"/>
<dbReference type="Proteomes" id="UP000000799">
    <property type="component" value="Chromosome"/>
</dbReference>
<dbReference type="GO" id="GO:0005886">
    <property type="term" value="C:plasma membrane"/>
    <property type="evidence" value="ECO:0007669"/>
    <property type="project" value="UniProtKB-SubCell"/>
</dbReference>
<dbReference type="GO" id="GO:0008932">
    <property type="term" value="F:lytic endotransglycosylase activity"/>
    <property type="evidence" value="ECO:0007669"/>
    <property type="project" value="UniProtKB-UniRule"/>
</dbReference>
<dbReference type="GO" id="GO:0042834">
    <property type="term" value="F:peptidoglycan binding"/>
    <property type="evidence" value="ECO:0007669"/>
    <property type="project" value="InterPro"/>
</dbReference>
<dbReference type="GO" id="GO:0071555">
    <property type="term" value="P:cell wall organization"/>
    <property type="evidence" value="ECO:0007669"/>
    <property type="project" value="UniProtKB-KW"/>
</dbReference>
<dbReference type="GO" id="GO:0000270">
    <property type="term" value="P:peptidoglycan metabolic process"/>
    <property type="evidence" value="ECO:0007669"/>
    <property type="project" value="UniProtKB-UniRule"/>
</dbReference>
<dbReference type="CDD" id="cd22268">
    <property type="entry name" value="DPBB_RlpA-like"/>
    <property type="match status" value="1"/>
</dbReference>
<dbReference type="Gene3D" id="2.40.40.10">
    <property type="entry name" value="RlpA-like domain"/>
    <property type="match status" value="1"/>
</dbReference>
<dbReference type="Gene3D" id="3.30.70.1070">
    <property type="entry name" value="Sporulation related repeat"/>
    <property type="match status" value="1"/>
</dbReference>
<dbReference type="HAMAP" id="MF_02071">
    <property type="entry name" value="RlpA"/>
    <property type="match status" value="1"/>
</dbReference>
<dbReference type="InterPro" id="IPR034718">
    <property type="entry name" value="RlpA"/>
</dbReference>
<dbReference type="InterPro" id="IPR009009">
    <property type="entry name" value="RlpA-like_DPBB"/>
</dbReference>
<dbReference type="InterPro" id="IPR036908">
    <property type="entry name" value="RlpA-like_sf"/>
</dbReference>
<dbReference type="InterPro" id="IPR012997">
    <property type="entry name" value="RplA"/>
</dbReference>
<dbReference type="InterPro" id="IPR007730">
    <property type="entry name" value="SPOR-like_dom"/>
</dbReference>
<dbReference type="InterPro" id="IPR036680">
    <property type="entry name" value="SPOR-like_sf"/>
</dbReference>
<dbReference type="NCBIfam" id="TIGR00413">
    <property type="entry name" value="rlpA"/>
    <property type="match status" value="1"/>
</dbReference>
<dbReference type="PANTHER" id="PTHR34183">
    <property type="entry name" value="ENDOLYTIC PEPTIDOGLYCAN TRANSGLYCOSYLASE RLPA"/>
    <property type="match status" value="1"/>
</dbReference>
<dbReference type="PANTHER" id="PTHR34183:SF1">
    <property type="entry name" value="ENDOLYTIC PEPTIDOGLYCAN TRANSGLYCOSYLASE RLPA"/>
    <property type="match status" value="1"/>
</dbReference>
<dbReference type="Pfam" id="PF03330">
    <property type="entry name" value="DPBB_1"/>
    <property type="match status" value="1"/>
</dbReference>
<dbReference type="Pfam" id="PF05036">
    <property type="entry name" value="SPOR"/>
    <property type="match status" value="1"/>
</dbReference>
<dbReference type="SUPFAM" id="SSF50685">
    <property type="entry name" value="Barwin-like endoglucanases"/>
    <property type="match status" value="1"/>
</dbReference>
<dbReference type="SUPFAM" id="SSF110997">
    <property type="entry name" value="Sporulation related repeat"/>
    <property type="match status" value="1"/>
</dbReference>
<dbReference type="PROSITE" id="PS51257">
    <property type="entry name" value="PROKAR_LIPOPROTEIN"/>
    <property type="match status" value="1"/>
</dbReference>
<dbReference type="PROSITE" id="PS51724">
    <property type="entry name" value="SPOR"/>
    <property type="match status" value="1"/>
</dbReference>
<reference key="1">
    <citation type="journal article" date="2000" name="Nature">
        <title>The genome sequence of the food-borne pathogen Campylobacter jejuni reveals hypervariable sequences.</title>
        <authorList>
            <person name="Parkhill J."/>
            <person name="Wren B.W."/>
            <person name="Mungall K.L."/>
            <person name="Ketley J.M."/>
            <person name="Churcher C.M."/>
            <person name="Basham D."/>
            <person name="Chillingworth T."/>
            <person name="Davies R.M."/>
            <person name="Feltwell T."/>
            <person name="Holroyd S."/>
            <person name="Jagels K."/>
            <person name="Karlyshev A.V."/>
            <person name="Moule S."/>
            <person name="Pallen M.J."/>
            <person name="Penn C.W."/>
            <person name="Quail M.A."/>
            <person name="Rajandream M.A."/>
            <person name="Rutherford K.M."/>
            <person name="van Vliet A.H.M."/>
            <person name="Whitehead S."/>
            <person name="Barrell B.G."/>
        </authorList>
    </citation>
    <scope>NUCLEOTIDE SEQUENCE [LARGE SCALE GENOMIC DNA]</scope>
    <source>
        <strain>ATCC 700819 / NCTC 11168</strain>
    </source>
</reference>
<organism>
    <name type="scientific">Campylobacter jejuni subsp. jejuni serotype O:2 (strain ATCC 700819 / NCTC 11168)</name>
    <dbReference type="NCBI Taxonomy" id="192222"/>
    <lineage>
        <taxon>Bacteria</taxon>
        <taxon>Pseudomonadati</taxon>
        <taxon>Campylobacterota</taxon>
        <taxon>Epsilonproteobacteria</taxon>
        <taxon>Campylobacterales</taxon>
        <taxon>Campylobacteraceae</taxon>
        <taxon>Campylobacter</taxon>
    </lineage>
</organism>
<proteinExistence type="inferred from homology"/>
<feature type="signal peptide" evidence="1">
    <location>
        <begin position="1"/>
        <end position="22"/>
    </location>
</feature>
<feature type="chain" id="PRO_0000030802" description="Endolytic peptidoglycan transglycosylase RlpA" evidence="1">
    <location>
        <begin position="23"/>
        <end position="275"/>
    </location>
</feature>
<feature type="domain" description="SPOR" evidence="1">
    <location>
        <begin position="200"/>
        <end position="275"/>
    </location>
</feature>
<feature type="lipid moiety-binding region" description="N-palmitoyl cysteine" evidence="1">
    <location>
        <position position="23"/>
    </location>
</feature>
<feature type="lipid moiety-binding region" description="S-diacylglycerol cysteine" evidence="1">
    <location>
        <position position="23"/>
    </location>
</feature>
<accession>Q9PHM1</accession>
<accession>Q0PAM2</accession>
<keyword id="KW-1003">Cell membrane</keyword>
<keyword id="KW-0961">Cell wall biogenesis/degradation</keyword>
<keyword id="KW-0449">Lipoprotein</keyword>
<keyword id="KW-0456">Lyase</keyword>
<keyword id="KW-0472">Membrane</keyword>
<keyword id="KW-0564">Palmitate</keyword>
<keyword id="KW-1185">Reference proteome</keyword>
<keyword id="KW-0732">Signal</keyword>
<protein>
    <recommendedName>
        <fullName evidence="1">Endolytic peptidoglycan transglycosylase RlpA</fullName>
        <ecNumber evidence="1">4.2.2.-</ecNumber>
    </recommendedName>
</protein>
<comment type="function">
    <text evidence="1">Lytic transglycosylase with a strong preference for naked glycan strands that lack stem peptides.</text>
</comment>
<comment type="subcellular location">
    <subcellularLocation>
        <location evidence="1">Cell membrane</location>
        <topology evidence="1">Lipid-anchor</topology>
    </subcellularLocation>
</comment>
<comment type="similarity">
    <text evidence="1">Belongs to the RlpA family.</text>
</comment>
<name>RLPA_CAMJE</name>
<evidence type="ECO:0000255" key="1">
    <source>
        <dbReference type="HAMAP-Rule" id="MF_02071"/>
    </source>
</evidence>